<comment type="function">
    <text evidence="1">Catalyzes the transfer of endogenously produced octanoic acid from octanoyl-acyl-carrier-protein onto the lipoyl domains of lipoate-dependent enzymes. Lipoyl-ACP can also act as a substrate although octanoyl-ACP is likely to be the physiological substrate.</text>
</comment>
<comment type="catalytic activity">
    <reaction evidence="1">
        <text>octanoyl-[ACP] + L-lysyl-[protein] = N(6)-octanoyl-L-lysyl-[protein] + holo-[ACP] + H(+)</text>
        <dbReference type="Rhea" id="RHEA:17665"/>
        <dbReference type="Rhea" id="RHEA-COMP:9636"/>
        <dbReference type="Rhea" id="RHEA-COMP:9685"/>
        <dbReference type="Rhea" id="RHEA-COMP:9752"/>
        <dbReference type="Rhea" id="RHEA-COMP:9928"/>
        <dbReference type="ChEBI" id="CHEBI:15378"/>
        <dbReference type="ChEBI" id="CHEBI:29969"/>
        <dbReference type="ChEBI" id="CHEBI:64479"/>
        <dbReference type="ChEBI" id="CHEBI:78463"/>
        <dbReference type="ChEBI" id="CHEBI:78809"/>
        <dbReference type="EC" id="2.3.1.181"/>
    </reaction>
</comment>
<comment type="pathway">
    <text evidence="1">Protein modification; protein lipoylation via endogenous pathway; protein N(6)-(lipoyl)lysine from octanoyl-[acyl-carrier-protein]: step 1/2.</text>
</comment>
<comment type="subcellular location">
    <subcellularLocation>
        <location evidence="1">Cytoplasm</location>
    </subcellularLocation>
</comment>
<comment type="miscellaneous">
    <text evidence="1">In the reaction, the free carboxyl group of octanoic acid is attached via an amide linkage to the epsilon-amino group of a specific lysine residue of lipoyl domains of lipoate-dependent enzymes.</text>
</comment>
<comment type="similarity">
    <text evidence="1">Belongs to the LipB family.</text>
</comment>
<keyword id="KW-0012">Acyltransferase</keyword>
<keyword id="KW-0963">Cytoplasm</keyword>
<keyword id="KW-1185">Reference proteome</keyword>
<keyword id="KW-0808">Transferase</keyword>
<accession>Q5YZ58</accession>
<gene>
    <name evidence="1" type="primary">lipB</name>
    <name type="ordered locus">NFA_16870</name>
</gene>
<dbReference type="EC" id="2.3.1.181" evidence="1"/>
<dbReference type="EMBL" id="AP006618">
    <property type="protein sequence ID" value="BAD56533.1"/>
    <property type="molecule type" value="Genomic_DNA"/>
</dbReference>
<dbReference type="RefSeq" id="WP_011208218.1">
    <property type="nucleotide sequence ID" value="NC_006361.1"/>
</dbReference>
<dbReference type="SMR" id="Q5YZ58"/>
<dbReference type="STRING" id="247156.NFA_16870"/>
<dbReference type="GeneID" id="61132471"/>
<dbReference type="KEGG" id="nfa:NFA_16870"/>
<dbReference type="eggNOG" id="COG0321">
    <property type="taxonomic scope" value="Bacteria"/>
</dbReference>
<dbReference type="HOGENOM" id="CLU_035168_2_1_11"/>
<dbReference type="OrthoDB" id="9787061at2"/>
<dbReference type="UniPathway" id="UPA00538">
    <property type="reaction ID" value="UER00592"/>
</dbReference>
<dbReference type="Proteomes" id="UP000006820">
    <property type="component" value="Chromosome"/>
</dbReference>
<dbReference type="GO" id="GO:0005737">
    <property type="term" value="C:cytoplasm"/>
    <property type="evidence" value="ECO:0007669"/>
    <property type="project" value="UniProtKB-SubCell"/>
</dbReference>
<dbReference type="GO" id="GO:0033819">
    <property type="term" value="F:lipoyl(octanoyl) transferase activity"/>
    <property type="evidence" value="ECO:0007669"/>
    <property type="project" value="UniProtKB-EC"/>
</dbReference>
<dbReference type="GO" id="GO:0036211">
    <property type="term" value="P:protein modification process"/>
    <property type="evidence" value="ECO:0007669"/>
    <property type="project" value="InterPro"/>
</dbReference>
<dbReference type="CDD" id="cd16444">
    <property type="entry name" value="LipB"/>
    <property type="match status" value="1"/>
</dbReference>
<dbReference type="Gene3D" id="3.30.930.10">
    <property type="entry name" value="Bira Bifunctional Protein, Domain 2"/>
    <property type="match status" value="1"/>
</dbReference>
<dbReference type="HAMAP" id="MF_00013">
    <property type="entry name" value="LipB"/>
    <property type="match status" value="1"/>
</dbReference>
<dbReference type="InterPro" id="IPR045864">
    <property type="entry name" value="aa-tRNA-synth_II/BPL/LPL"/>
</dbReference>
<dbReference type="InterPro" id="IPR004143">
    <property type="entry name" value="BPL_LPL_catalytic"/>
</dbReference>
<dbReference type="InterPro" id="IPR000544">
    <property type="entry name" value="Octanoyltransferase"/>
</dbReference>
<dbReference type="InterPro" id="IPR020605">
    <property type="entry name" value="Octanoyltransferase_CS"/>
</dbReference>
<dbReference type="NCBIfam" id="TIGR00214">
    <property type="entry name" value="lipB"/>
    <property type="match status" value="1"/>
</dbReference>
<dbReference type="NCBIfam" id="NF010925">
    <property type="entry name" value="PRK14345.1"/>
    <property type="match status" value="1"/>
</dbReference>
<dbReference type="PANTHER" id="PTHR10993:SF7">
    <property type="entry name" value="LIPOYLTRANSFERASE 2, MITOCHONDRIAL-RELATED"/>
    <property type="match status" value="1"/>
</dbReference>
<dbReference type="PANTHER" id="PTHR10993">
    <property type="entry name" value="OCTANOYLTRANSFERASE"/>
    <property type="match status" value="1"/>
</dbReference>
<dbReference type="Pfam" id="PF21948">
    <property type="entry name" value="LplA-B_cat"/>
    <property type="match status" value="1"/>
</dbReference>
<dbReference type="PIRSF" id="PIRSF016262">
    <property type="entry name" value="LPLase"/>
    <property type="match status" value="1"/>
</dbReference>
<dbReference type="SUPFAM" id="SSF55681">
    <property type="entry name" value="Class II aaRS and biotin synthetases"/>
    <property type="match status" value="1"/>
</dbReference>
<dbReference type="PROSITE" id="PS51733">
    <property type="entry name" value="BPL_LPL_CATALYTIC"/>
    <property type="match status" value="1"/>
</dbReference>
<dbReference type="PROSITE" id="PS01313">
    <property type="entry name" value="LIPB"/>
    <property type="match status" value="1"/>
</dbReference>
<reference key="1">
    <citation type="journal article" date="2004" name="Proc. Natl. Acad. Sci. U.S.A.">
        <title>The complete genomic sequence of Nocardia farcinica IFM 10152.</title>
        <authorList>
            <person name="Ishikawa J."/>
            <person name="Yamashita A."/>
            <person name="Mikami Y."/>
            <person name="Hoshino Y."/>
            <person name="Kurita H."/>
            <person name="Hotta K."/>
            <person name="Shiba T."/>
            <person name="Hattori M."/>
        </authorList>
    </citation>
    <scope>NUCLEOTIDE SEQUENCE [LARGE SCALE GENOMIC DNA]</scope>
    <source>
        <strain>IFM 10152</strain>
    </source>
</reference>
<organism>
    <name type="scientific">Nocardia farcinica (strain IFM 10152)</name>
    <dbReference type="NCBI Taxonomy" id="247156"/>
    <lineage>
        <taxon>Bacteria</taxon>
        <taxon>Bacillati</taxon>
        <taxon>Actinomycetota</taxon>
        <taxon>Actinomycetes</taxon>
        <taxon>Mycobacteriales</taxon>
        <taxon>Nocardiaceae</taxon>
        <taxon>Nocardia</taxon>
    </lineage>
</organism>
<protein>
    <recommendedName>
        <fullName evidence="1">Octanoyltransferase</fullName>
        <ecNumber evidence="1">2.3.1.181</ecNumber>
    </recommendedName>
    <alternativeName>
        <fullName evidence="1">Lipoate-protein ligase B</fullName>
    </alternativeName>
    <alternativeName>
        <fullName evidence="1">Lipoyl/octanoyl transferase</fullName>
    </alternativeName>
    <alternativeName>
        <fullName evidence="1">Octanoyl-[acyl-carrier-protein]-protein N-octanoyltransferase</fullName>
    </alternativeName>
</protein>
<sequence length="250" mass="26874">MNDTRTSRSARFDTTPVVVEDLGLIDYHAAWELQRTIAAERAEGAGSDRLLLLEHPSVYTAGRRTEDADLPIDGSPVVQVDRGGKITWHGPGQLVGYPIVRLAEPVDVVDYVRRLEEALISVCTELGLTVGRVEGRSGVWLPATETLAERKIAAIGIRVQRGVALHGISFNCNSALDGFQAIVPCGIQDAGVTTLTRELGREVTVAEVKPMVATAVVQALNGDLPVRDHDLPRPGTTPAAPNSTRVRSMT</sequence>
<evidence type="ECO:0000255" key="1">
    <source>
        <dbReference type="HAMAP-Rule" id="MF_00013"/>
    </source>
</evidence>
<evidence type="ECO:0000255" key="2">
    <source>
        <dbReference type="PROSITE-ProRule" id="PRU01067"/>
    </source>
</evidence>
<evidence type="ECO:0000256" key="3">
    <source>
        <dbReference type="SAM" id="MobiDB-lite"/>
    </source>
</evidence>
<proteinExistence type="inferred from homology"/>
<name>LIPB_NOCFA</name>
<feature type="chain" id="PRO_0000062856" description="Octanoyltransferase">
    <location>
        <begin position="1"/>
        <end position="250"/>
    </location>
</feature>
<feature type="domain" description="BPL/LPL catalytic" evidence="2">
    <location>
        <begin position="44"/>
        <end position="224"/>
    </location>
</feature>
<feature type="region of interest" description="Disordered" evidence="3">
    <location>
        <begin position="224"/>
        <end position="250"/>
    </location>
</feature>
<feature type="compositionally biased region" description="Polar residues" evidence="3">
    <location>
        <begin position="239"/>
        <end position="250"/>
    </location>
</feature>
<feature type="active site" description="Acyl-thioester intermediate" evidence="1">
    <location>
        <position position="185"/>
    </location>
</feature>
<feature type="binding site" evidence="1">
    <location>
        <begin position="82"/>
        <end position="89"/>
    </location>
    <ligand>
        <name>substrate</name>
    </ligand>
</feature>
<feature type="binding site" evidence="1">
    <location>
        <begin position="154"/>
        <end position="156"/>
    </location>
    <ligand>
        <name>substrate</name>
    </ligand>
</feature>
<feature type="binding site" evidence="1">
    <location>
        <begin position="167"/>
        <end position="169"/>
    </location>
    <ligand>
        <name>substrate</name>
    </ligand>
</feature>
<feature type="site" description="Lowers pKa of active site Cys" evidence="1">
    <location>
        <position position="151"/>
    </location>
</feature>